<name>PVK1_AUSRA</name>
<accession>B3A097</accession>
<evidence type="ECO:0000250" key="1">
    <source>
        <dbReference type="UniProtKB" id="P83923"/>
    </source>
</evidence>
<evidence type="ECO:0000255" key="2"/>
<evidence type="ECO:0000269" key="3">
    <source>
    </source>
</evidence>
<evidence type="ECO:0000303" key="4">
    <source>
    </source>
</evidence>
<evidence type="ECO:0000305" key="5"/>
<evidence type="ECO:0000305" key="6">
    <source>
    </source>
</evidence>
<sequence length="11" mass="1169">EAAGLLPFPRV</sequence>
<reference evidence="5" key="1">
    <citation type="journal article" date="2012" name="Syst. Biol.">
        <title>Peptidomics-based phylogeny and biogeography of Mantophasmatodea (Hexapoda).</title>
        <authorList>
            <person name="Predel R."/>
            <person name="Neupert S."/>
            <person name="Huetteroth W."/>
            <person name="Kahnt J."/>
            <person name="Waidelich D."/>
            <person name="Roth S."/>
        </authorList>
    </citation>
    <scope>PROTEIN SEQUENCE</scope>
    <scope>AMIDATION AT VAL-11</scope>
    <source>
        <tissue evidence="3">Abdominal perisympathetic organs</tissue>
    </source>
</reference>
<dbReference type="GO" id="GO:0005576">
    <property type="term" value="C:extracellular region"/>
    <property type="evidence" value="ECO:0007669"/>
    <property type="project" value="UniProtKB-SubCell"/>
</dbReference>
<dbReference type="GO" id="GO:0007218">
    <property type="term" value="P:neuropeptide signaling pathway"/>
    <property type="evidence" value="ECO:0007669"/>
    <property type="project" value="UniProtKB-KW"/>
</dbReference>
<dbReference type="InterPro" id="IPR013231">
    <property type="entry name" value="Periviscerokinin"/>
</dbReference>
<dbReference type="Pfam" id="PF08259">
    <property type="entry name" value="Periviscerokin"/>
    <property type="match status" value="1"/>
</dbReference>
<feature type="peptide" id="PRO_0000421634" description="CAPA-Periviscerokinin-1" evidence="3">
    <location>
        <begin position="1"/>
        <end position="11"/>
    </location>
</feature>
<feature type="modified residue" description="Valine amide" evidence="3">
    <location>
        <position position="11"/>
    </location>
</feature>
<organism>
    <name type="scientific">Austrophasma rawsonvillense</name>
    <name type="common">Gladiator</name>
    <name type="synonym">Heel-walker</name>
    <dbReference type="NCBI Taxonomy" id="253137"/>
    <lineage>
        <taxon>Eukaryota</taxon>
        <taxon>Metazoa</taxon>
        <taxon>Ecdysozoa</taxon>
        <taxon>Arthropoda</taxon>
        <taxon>Hexapoda</taxon>
        <taxon>Insecta</taxon>
        <taxon>Pterygota</taxon>
        <taxon>Neoptera</taxon>
        <taxon>Polyneoptera</taxon>
        <taxon>Mantophasmatodea</taxon>
        <taxon>Austrophasmatidae</taxon>
        <taxon>Austrophasma</taxon>
    </lineage>
</organism>
<protein>
    <recommendedName>
        <fullName evidence="4">CAPA-Periviscerokinin-1</fullName>
        <shortName evidence="4">CAPA-PVK-1</shortName>
    </recommendedName>
</protein>
<comment type="function">
    <text evidence="1">Mediates visceral muscle contractile activity (myotropic activity).</text>
</comment>
<comment type="subcellular location">
    <subcellularLocation>
        <location evidence="6">Secreted</location>
    </subcellularLocation>
</comment>
<comment type="similarity">
    <text evidence="2">Belongs to the periviscerokinin family.</text>
</comment>
<proteinExistence type="evidence at protein level"/>
<keyword id="KW-0027">Amidation</keyword>
<keyword id="KW-0903">Direct protein sequencing</keyword>
<keyword id="KW-0527">Neuropeptide</keyword>
<keyword id="KW-0964">Secreted</keyword>